<keyword id="KW-0012">Acyltransferase</keyword>
<keyword id="KW-0808">Transferase</keyword>
<accession>Q6GJ93</accession>
<evidence type="ECO:0000250" key="1"/>
<evidence type="ECO:0000305" key="2"/>
<reference key="1">
    <citation type="journal article" date="2004" name="Proc. Natl. Acad. Sci. U.S.A.">
        <title>Complete genomes of two clinical Staphylococcus aureus strains: evidence for the rapid evolution of virulence and drug resistance.</title>
        <authorList>
            <person name="Holden M.T.G."/>
            <person name="Feil E.J."/>
            <person name="Lindsay J.A."/>
            <person name="Peacock S.J."/>
            <person name="Day N.P.J."/>
            <person name="Enright M.C."/>
            <person name="Foster T.J."/>
            <person name="Moore C.E."/>
            <person name="Hurst L."/>
            <person name="Atkin R."/>
            <person name="Barron A."/>
            <person name="Bason N."/>
            <person name="Bentley S.D."/>
            <person name="Chillingworth C."/>
            <person name="Chillingworth T."/>
            <person name="Churcher C."/>
            <person name="Clark L."/>
            <person name="Corton C."/>
            <person name="Cronin A."/>
            <person name="Doggett J."/>
            <person name="Dowd L."/>
            <person name="Feltwell T."/>
            <person name="Hance Z."/>
            <person name="Harris B."/>
            <person name="Hauser H."/>
            <person name="Holroyd S."/>
            <person name="Jagels K."/>
            <person name="James K.D."/>
            <person name="Lennard N."/>
            <person name="Line A."/>
            <person name="Mayes R."/>
            <person name="Moule S."/>
            <person name="Mungall K."/>
            <person name="Ormond D."/>
            <person name="Quail M.A."/>
            <person name="Rabbinowitsch E."/>
            <person name="Rutherford K.M."/>
            <person name="Sanders M."/>
            <person name="Sharp S."/>
            <person name="Simmonds M."/>
            <person name="Stevens K."/>
            <person name="Whitehead S."/>
            <person name="Barrell B.G."/>
            <person name="Spratt B.G."/>
            <person name="Parkhill J."/>
        </authorList>
    </citation>
    <scope>NUCLEOTIDE SEQUENCE [LARGE SCALE GENOMIC DNA]</scope>
    <source>
        <strain>MRSA252</strain>
    </source>
</reference>
<dbReference type="EC" id="2.3.1.-"/>
<dbReference type="EMBL" id="BX571856">
    <property type="protein sequence ID" value="CAG39601.1"/>
    <property type="molecule type" value="Genomic_DNA"/>
</dbReference>
<dbReference type="RefSeq" id="WP_001070682.1">
    <property type="nucleotide sequence ID" value="NC_002952.2"/>
</dbReference>
<dbReference type="SMR" id="Q6GJ93"/>
<dbReference type="KEGG" id="sar:SAR0581"/>
<dbReference type="HOGENOM" id="CLU_031026_2_1_9"/>
<dbReference type="Proteomes" id="UP000000596">
    <property type="component" value="Chromosome"/>
</dbReference>
<dbReference type="GO" id="GO:0005737">
    <property type="term" value="C:cytoplasm"/>
    <property type="evidence" value="ECO:0007669"/>
    <property type="project" value="UniProtKB-ARBA"/>
</dbReference>
<dbReference type="GO" id="GO:0003988">
    <property type="term" value="F:acetyl-CoA C-acyltransferase activity"/>
    <property type="evidence" value="ECO:0007669"/>
    <property type="project" value="TreeGrafter"/>
</dbReference>
<dbReference type="GO" id="GO:0006635">
    <property type="term" value="P:fatty acid beta-oxidation"/>
    <property type="evidence" value="ECO:0007669"/>
    <property type="project" value="TreeGrafter"/>
</dbReference>
<dbReference type="GO" id="GO:0010124">
    <property type="term" value="P:phenylacetate catabolic process"/>
    <property type="evidence" value="ECO:0007669"/>
    <property type="project" value="TreeGrafter"/>
</dbReference>
<dbReference type="CDD" id="cd00751">
    <property type="entry name" value="thiolase"/>
    <property type="match status" value="1"/>
</dbReference>
<dbReference type="Gene3D" id="3.40.47.10">
    <property type="match status" value="2"/>
</dbReference>
<dbReference type="InterPro" id="IPR002155">
    <property type="entry name" value="Thiolase"/>
</dbReference>
<dbReference type="InterPro" id="IPR016039">
    <property type="entry name" value="Thiolase-like"/>
</dbReference>
<dbReference type="InterPro" id="IPR050215">
    <property type="entry name" value="Thiolase-like_sf_Thiolase"/>
</dbReference>
<dbReference type="InterPro" id="IPR020617">
    <property type="entry name" value="Thiolase_C"/>
</dbReference>
<dbReference type="InterPro" id="IPR020613">
    <property type="entry name" value="Thiolase_CS"/>
</dbReference>
<dbReference type="InterPro" id="IPR020616">
    <property type="entry name" value="Thiolase_N"/>
</dbReference>
<dbReference type="NCBIfam" id="TIGR01930">
    <property type="entry name" value="AcCoA-C-Actrans"/>
    <property type="match status" value="1"/>
</dbReference>
<dbReference type="PANTHER" id="PTHR43853">
    <property type="entry name" value="3-KETOACYL-COA THIOLASE, PEROXISOMAL"/>
    <property type="match status" value="1"/>
</dbReference>
<dbReference type="PANTHER" id="PTHR43853:SF3">
    <property type="entry name" value="ACETYL-COA C-ACETYLTRANSFERASE YHFS-RELATED"/>
    <property type="match status" value="1"/>
</dbReference>
<dbReference type="Pfam" id="PF02803">
    <property type="entry name" value="Thiolase_C"/>
    <property type="match status" value="1"/>
</dbReference>
<dbReference type="Pfam" id="PF00108">
    <property type="entry name" value="Thiolase_N"/>
    <property type="match status" value="1"/>
</dbReference>
<dbReference type="PIRSF" id="PIRSF000429">
    <property type="entry name" value="Ac-CoA_Ac_transf"/>
    <property type="match status" value="1"/>
</dbReference>
<dbReference type="SUPFAM" id="SSF53901">
    <property type="entry name" value="Thiolase-like"/>
    <property type="match status" value="2"/>
</dbReference>
<dbReference type="PROSITE" id="PS00737">
    <property type="entry name" value="THIOLASE_2"/>
    <property type="match status" value="1"/>
</dbReference>
<gene>
    <name type="primary">vraB</name>
    <name type="ordered locus">SAR0581</name>
</gene>
<comment type="similarity">
    <text evidence="2">Belongs to the thiolase-like superfamily. Thiolase family.</text>
</comment>
<name>VRAB_STAAR</name>
<protein>
    <recommendedName>
        <fullName>Putative acetyl-CoA C-acetyltransferase VraB</fullName>
        <ecNumber>2.3.1.-</ecNumber>
    </recommendedName>
</protein>
<organism>
    <name type="scientific">Staphylococcus aureus (strain MRSA252)</name>
    <dbReference type="NCBI Taxonomy" id="282458"/>
    <lineage>
        <taxon>Bacteria</taxon>
        <taxon>Bacillati</taxon>
        <taxon>Bacillota</taxon>
        <taxon>Bacilli</taxon>
        <taxon>Bacillales</taxon>
        <taxon>Staphylococcaceae</taxon>
        <taxon>Staphylococcus</taxon>
    </lineage>
</organism>
<proteinExistence type="inferred from homology"/>
<sequence>MNQAVIVAAKRTAFGKYGGTLKHLEPEQLLKPLFQHFKEKYPEVISKIDDVVLGNVVGNGGNIARKALLEAGLKDSIPGVTIDRQCGSGLESVQYACRMIQAGAGKVYIAGGVESTSRAPWKIKRPHSVYETALPEFYERASFAPEMSDPSMIQGAENVAKMYGVSRELQDEFAYRSHQLTAENVKNGNISQEILPITVKGELFNTDESLKSHIPKDNFGRFKPVIKGGTVTAANSCMKNDGAVLLLIMEKDMAYELGFDHGLLFKDGVTVGVDSNLPGIGPVPAISNLLKRNQLTIENIEVIEINEAFSAQVVACQQALNISNTQLNIWGGALASGHPYGASGAQLVTRLFYMFDKESMIASMGIGGGLGNAALFTRF</sequence>
<feature type="chain" id="PRO_0000206429" description="Putative acetyl-CoA C-acetyltransferase VraB">
    <location>
        <begin position="1"/>
        <end position="379"/>
    </location>
</feature>
<feature type="active site" description="Acyl-thioester intermediate" evidence="1">
    <location>
        <position position="86"/>
    </location>
</feature>
<feature type="active site" description="Proton acceptor" evidence="1">
    <location>
        <position position="338"/>
    </location>
</feature>